<evidence type="ECO:0000250" key="1">
    <source>
        <dbReference type="UniProtKB" id="P37299"/>
    </source>
</evidence>
<evidence type="ECO:0000269" key="2">
    <source>
    </source>
</evidence>
<evidence type="ECO:0000269" key="3">
    <source>
    </source>
</evidence>
<evidence type="ECO:0000305" key="4"/>
<evidence type="ECO:0007829" key="5">
    <source>
        <dbReference type="PDB" id="2FYU"/>
    </source>
</evidence>
<evidence type="ECO:0007829" key="6">
    <source>
        <dbReference type="PDB" id="7TZ6"/>
    </source>
</evidence>
<dbReference type="EMBL" id="D55637">
    <property type="protein sequence ID" value="BAA21747.1"/>
    <property type="molecule type" value="mRNA"/>
</dbReference>
<dbReference type="EMBL" id="BC102080">
    <property type="protein sequence ID" value="AAI02081.1"/>
    <property type="molecule type" value="mRNA"/>
</dbReference>
<dbReference type="EMBL" id="BC126774">
    <property type="protein sequence ID" value="AAI26775.1"/>
    <property type="molecule type" value="mRNA"/>
</dbReference>
<dbReference type="PIR" id="A24096">
    <property type="entry name" value="CBBOC6"/>
</dbReference>
<dbReference type="RefSeq" id="NP_776640.1">
    <property type="nucleotide sequence ID" value="NM_174215.2"/>
</dbReference>
<dbReference type="PDB" id="1BE3">
    <property type="method" value="X-ray"/>
    <property type="resolution" value="3.00 A"/>
    <property type="chains" value="K=1-56"/>
</dbReference>
<dbReference type="PDB" id="1BGY">
    <property type="method" value="X-ray"/>
    <property type="resolution" value="3.00 A"/>
    <property type="chains" value="K/W=1-56"/>
</dbReference>
<dbReference type="PDB" id="1L0L">
    <property type="method" value="X-ray"/>
    <property type="resolution" value="2.35 A"/>
    <property type="chains" value="K=1-56"/>
</dbReference>
<dbReference type="PDB" id="1L0N">
    <property type="method" value="X-ray"/>
    <property type="resolution" value="2.60 A"/>
    <property type="chains" value="K=1-56"/>
</dbReference>
<dbReference type="PDB" id="1NTK">
    <property type="method" value="X-ray"/>
    <property type="resolution" value="2.60 A"/>
    <property type="chains" value="K=1-56"/>
</dbReference>
<dbReference type="PDB" id="1NTM">
    <property type="method" value="X-ray"/>
    <property type="resolution" value="2.40 A"/>
    <property type="chains" value="K=1-56"/>
</dbReference>
<dbReference type="PDB" id="1NTZ">
    <property type="method" value="X-ray"/>
    <property type="resolution" value="2.60 A"/>
    <property type="chains" value="K=1-56"/>
</dbReference>
<dbReference type="PDB" id="1NU1">
    <property type="method" value="X-ray"/>
    <property type="resolution" value="3.20 A"/>
    <property type="chains" value="K=1-56"/>
</dbReference>
<dbReference type="PDB" id="1QCR">
    <property type="method" value="X-ray"/>
    <property type="resolution" value="2.70 A"/>
    <property type="chains" value="K=1-45"/>
</dbReference>
<dbReference type="PDB" id="1SQB">
    <property type="method" value="X-ray"/>
    <property type="resolution" value="2.69 A"/>
    <property type="chains" value="K=1-56"/>
</dbReference>
<dbReference type="PDB" id="1SQP">
    <property type="method" value="X-ray"/>
    <property type="resolution" value="2.70 A"/>
    <property type="chains" value="K=1-56"/>
</dbReference>
<dbReference type="PDB" id="1SQQ">
    <property type="method" value="X-ray"/>
    <property type="resolution" value="3.00 A"/>
    <property type="chains" value="K=1-56"/>
</dbReference>
<dbReference type="PDB" id="1SQV">
    <property type="method" value="X-ray"/>
    <property type="resolution" value="2.85 A"/>
    <property type="chains" value="K=1-56"/>
</dbReference>
<dbReference type="PDB" id="1SQX">
    <property type="method" value="X-ray"/>
    <property type="resolution" value="2.60 A"/>
    <property type="chains" value="K=1-56"/>
</dbReference>
<dbReference type="PDB" id="2FYU">
    <property type="method" value="X-ray"/>
    <property type="resolution" value="2.26 A"/>
    <property type="chains" value="K=1-56"/>
</dbReference>
<dbReference type="PDB" id="2YBB">
    <property type="method" value="EM"/>
    <property type="resolution" value="19.00 A"/>
    <property type="chains" value="K/k=1-56"/>
</dbReference>
<dbReference type="PDB" id="5GPN">
    <property type="method" value="EM"/>
    <property type="resolution" value="5.40 A"/>
    <property type="chains" value="K/V=1-56"/>
</dbReference>
<dbReference type="PDB" id="5KLV">
    <property type="method" value="X-ray"/>
    <property type="resolution" value="2.65 A"/>
    <property type="chains" value="K=2-56"/>
</dbReference>
<dbReference type="PDB" id="5LUF">
    <property type="method" value="EM"/>
    <property type="resolution" value="9.10 A"/>
    <property type="chains" value="k/w=1-56"/>
</dbReference>
<dbReference type="PDB" id="5NMI">
    <property type="method" value="X-ray"/>
    <property type="resolution" value="3.50 A"/>
    <property type="chains" value="K/X=15-36"/>
</dbReference>
<dbReference type="PDB" id="6NHG">
    <property type="method" value="X-ray"/>
    <property type="resolution" value="2.80 A"/>
    <property type="chains" value="K=2-56"/>
</dbReference>
<dbReference type="PDB" id="7DGQ">
    <property type="method" value="EM"/>
    <property type="resolution" value="5.00 A"/>
    <property type="chains" value="A4/t=1-56"/>
</dbReference>
<dbReference type="PDB" id="7DGR">
    <property type="method" value="EM"/>
    <property type="resolution" value="4.60 A"/>
    <property type="chains" value="A3/t=1-56"/>
</dbReference>
<dbReference type="PDB" id="7DGS">
    <property type="method" value="EM"/>
    <property type="resolution" value="7.80 A"/>
    <property type="chains" value="A3/t=1-56"/>
</dbReference>
<dbReference type="PDB" id="7DKF">
    <property type="method" value="EM"/>
    <property type="resolution" value="8.30 A"/>
    <property type="chains" value="K1/W1=1-56"/>
</dbReference>
<dbReference type="PDB" id="7TAY">
    <property type="method" value="X-ray"/>
    <property type="resolution" value="2.95 A"/>
    <property type="chains" value="K=1-56"/>
</dbReference>
<dbReference type="PDB" id="7TZ6">
    <property type="method" value="EM"/>
    <property type="resolution" value="2.88 A"/>
    <property type="chains" value="K/X=1-56"/>
</dbReference>
<dbReference type="PDB" id="8P65">
    <property type="method" value="EM"/>
    <property type="resolution" value="3.00 A"/>
    <property type="chains" value="K/X=1-49"/>
</dbReference>
<dbReference type="PDB" id="9GCX">
    <property type="method" value="X-ray"/>
    <property type="resolution" value="3.52 A"/>
    <property type="chains" value="K=1-56"/>
</dbReference>
<dbReference type="PDBsum" id="1BE3"/>
<dbReference type="PDBsum" id="1BGY"/>
<dbReference type="PDBsum" id="1L0L"/>
<dbReference type="PDBsum" id="1L0N"/>
<dbReference type="PDBsum" id="1NTK"/>
<dbReference type="PDBsum" id="1NTM"/>
<dbReference type="PDBsum" id="1NTZ"/>
<dbReference type="PDBsum" id="1NU1"/>
<dbReference type="PDBsum" id="1QCR"/>
<dbReference type="PDBsum" id="1SQB"/>
<dbReference type="PDBsum" id="1SQP"/>
<dbReference type="PDBsum" id="1SQQ"/>
<dbReference type="PDBsum" id="1SQV"/>
<dbReference type="PDBsum" id="1SQX"/>
<dbReference type="PDBsum" id="2FYU"/>
<dbReference type="PDBsum" id="2YBB"/>
<dbReference type="PDBsum" id="5GPN"/>
<dbReference type="PDBsum" id="5KLV"/>
<dbReference type="PDBsum" id="5LUF"/>
<dbReference type="PDBsum" id="5NMI"/>
<dbReference type="PDBsum" id="6NHG"/>
<dbReference type="PDBsum" id="7DGQ"/>
<dbReference type="PDBsum" id="7DGR"/>
<dbReference type="PDBsum" id="7DGS"/>
<dbReference type="PDBsum" id="7DKF"/>
<dbReference type="PDBsum" id="7TAY"/>
<dbReference type="PDBsum" id="7TZ6"/>
<dbReference type="PDBsum" id="8P65"/>
<dbReference type="PDBsum" id="9GCX"/>
<dbReference type="EMDB" id="EMD-17461"/>
<dbReference type="EMDB" id="EMD-26203"/>
<dbReference type="EMDB" id="EMD-30673"/>
<dbReference type="EMDB" id="EMD-30674"/>
<dbReference type="EMDB" id="EMD-30675"/>
<dbReference type="EMDB" id="EMD-30706"/>
<dbReference type="EMDB" id="EMD-4107"/>
<dbReference type="EMDB" id="EMD-9534"/>
<dbReference type="SMR" id="P07552"/>
<dbReference type="CORUM" id="P07552"/>
<dbReference type="DIP" id="DIP-61255N"/>
<dbReference type="FunCoup" id="P07552">
    <property type="interactions" value="407"/>
</dbReference>
<dbReference type="IntAct" id="P07552">
    <property type="interactions" value="1"/>
</dbReference>
<dbReference type="STRING" id="9913.ENSBTAP00000011458"/>
<dbReference type="PaxDb" id="9913-ENSBTAP00000011458"/>
<dbReference type="Ensembl" id="ENSBTAT00000011458.4">
    <property type="protein sequence ID" value="ENSBTAP00000011458.3"/>
    <property type="gene ID" value="ENSBTAG00000008692.4"/>
</dbReference>
<dbReference type="GeneID" id="281570"/>
<dbReference type="KEGG" id="bta:281570"/>
<dbReference type="CTD" id="10975"/>
<dbReference type="VEuPathDB" id="HostDB:ENSBTAG00000008692"/>
<dbReference type="VGNC" id="VGNC:110072">
    <property type="gene designation" value="UQCR11"/>
</dbReference>
<dbReference type="eggNOG" id="ENOG502S9FZ">
    <property type="taxonomic scope" value="Eukaryota"/>
</dbReference>
<dbReference type="GeneTree" id="ENSGT00390000018299"/>
<dbReference type="HOGENOM" id="CLU_211742_0_0_1"/>
<dbReference type="InParanoid" id="P07552"/>
<dbReference type="OMA" id="LAKNWMP"/>
<dbReference type="OrthoDB" id="15743at2759"/>
<dbReference type="TreeFam" id="TF105034"/>
<dbReference type="EvolutionaryTrace" id="P07552"/>
<dbReference type="Proteomes" id="UP000009136">
    <property type="component" value="Chromosome 7"/>
</dbReference>
<dbReference type="Bgee" id="ENSBTAG00000008692">
    <property type="expression patterns" value="Expressed in cardiac ventricle and 109 other cell types or tissues"/>
</dbReference>
<dbReference type="GO" id="GO:0005743">
    <property type="term" value="C:mitochondrial inner membrane"/>
    <property type="evidence" value="ECO:0000318"/>
    <property type="project" value="GO_Central"/>
</dbReference>
<dbReference type="GO" id="GO:0045275">
    <property type="term" value="C:respiratory chain complex III"/>
    <property type="evidence" value="ECO:0007669"/>
    <property type="project" value="Ensembl"/>
</dbReference>
<dbReference type="GO" id="GO:0006122">
    <property type="term" value="P:mitochondrial electron transport, ubiquinol to cytochrome c"/>
    <property type="evidence" value="ECO:0007669"/>
    <property type="project" value="InterPro"/>
</dbReference>
<dbReference type="FunFam" id="1.20.5.220:FF:000004">
    <property type="entry name" value="Cytochrome b-c1 complex subunit 10"/>
    <property type="match status" value="1"/>
</dbReference>
<dbReference type="Gene3D" id="1.20.5.220">
    <property type="match status" value="1"/>
</dbReference>
<dbReference type="InterPro" id="IPR029027">
    <property type="entry name" value="Single_a-helix_sf"/>
</dbReference>
<dbReference type="InterPro" id="IPR015089">
    <property type="entry name" value="UQCR"/>
</dbReference>
<dbReference type="PANTHER" id="PTHR15420:SF2">
    <property type="entry name" value="CYTOCHROME B-C1 COMPLEX SUBUNIT 10"/>
    <property type="match status" value="1"/>
</dbReference>
<dbReference type="PANTHER" id="PTHR15420">
    <property type="entry name" value="UBIQUINOL-CYTOCHROME C REDUCTASE COMPLEX 6.4 KD PROTEIN"/>
    <property type="match status" value="1"/>
</dbReference>
<dbReference type="Pfam" id="PF08997">
    <property type="entry name" value="UCR_6-4kD"/>
    <property type="match status" value="1"/>
</dbReference>
<dbReference type="SUPFAM" id="SSF81518">
    <property type="entry name" value="Subunit XI (6.4 kDa protein) of cytochrome bc1 complex (Ubiquinol-cytochrome c reductase)"/>
    <property type="match status" value="1"/>
</dbReference>
<feature type="chain" id="PRO_0000193559" description="Cytochrome b-c1 complex subunit 10">
    <location>
        <begin position="1"/>
        <end position="56"/>
    </location>
</feature>
<feature type="topological domain" description="Mitochondrial matrix" evidence="3">
    <location>
        <begin position="1"/>
        <end position="12"/>
    </location>
</feature>
<feature type="transmembrane region" description="Helical" evidence="3">
    <location>
        <begin position="13"/>
        <end position="35"/>
    </location>
</feature>
<feature type="topological domain" description="Mitochondrial intermembrane" evidence="3">
    <location>
        <begin position="36"/>
        <end position="56"/>
    </location>
</feature>
<feature type="sequence conflict" description="In Ref. 1; AA sequence." evidence="4" ref="1">
    <original>S</original>
    <variation>Q</variation>
    <location>
        <position position="22"/>
    </location>
</feature>
<feature type="sequence conflict" description="In Ref. 1; AA sequence." evidence="4" ref="1">
    <original>W</original>
    <variation>S</variation>
    <location>
        <position position="34"/>
    </location>
</feature>
<feature type="sequence conflict" description="In Ref. 1; AA sequence." evidence="4" ref="1">
    <original>W</original>
    <variation>S</variation>
    <location>
        <position position="38"/>
    </location>
</feature>
<feature type="helix" evidence="5">
    <location>
        <begin position="2"/>
        <end position="5"/>
    </location>
</feature>
<feature type="helix" evidence="5">
    <location>
        <begin position="8"/>
        <end position="36"/>
    </location>
</feature>
<feature type="helix" evidence="5">
    <location>
        <begin position="39"/>
        <end position="42"/>
    </location>
</feature>
<feature type="strand" evidence="5">
    <location>
        <begin position="44"/>
        <end position="47"/>
    </location>
</feature>
<feature type="helix" evidence="6">
    <location>
        <begin position="48"/>
        <end position="51"/>
    </location>
</feature>
<protein>
    <recommendedName>
        <fullName>Cytochrome b-c1 complex subunit 10</fullName>
    </recommendedName>
    <alternativeName>
        <fullName>Complex III subunit 10</fullName>
    </alternativeName>
    <alternativeName>
        <fullName>Complex III subunit XI</fullName>
    </alternativeName>
    <alternativeName>
        <fullName>Ubiquinol-cytochrome c reductase complex 6.4 kDa protein</fullName>
    </alternativeName>
</protein>
<comment type="function">
    <text evidence="1">Component of the ubiquinol-cytochrome c oxidoreductase, a multisubunit transmembrane complex that is part of the mitochondrial electron transport chain which drives oxidative phosphorylation. The respiratory chain contains 3 multisubunit complexes succinate dehydrogenase (complex II, CII), ubiquinol-cytochrome c oxidoreductase (cytochrome b-c1 complex, complex III, CIII) and cytochrome c oxidase (complex IV, CIV), that cooperate to transfer electrons derived from NADH and succinate to molecular oxygen, creating an electrochemical gradient over the inner membrane that drives transmembrane transport and the ATP synthase. The cytochrome b-c1 complex catalyzes electron transfer from ubiquinol to cytochrome c, linking this redox reaction to translocation of protons across the mitochondrial inner membrane, with protons being carried across the membrane as hydrogens on the quinol. In the process called Q cycle, 2 protons are consumed from the matrix, 4 protons are released into the intermembrane space and 2 electrons are passed to cytochrome c. QCR10 has a role in CIII assembly and RIP1 stability.</text>
</comment>
<comment type="subunit">
    <text evidence="2 3">Component of the ubiquinol-cytochrome c oxidoreductase (cytochrome b-c1 complex, complex III, CIII), a multisubunit enzyme composed of 11 subunits. The complex is composed of 3 respiratory subunits cytochrome b, cytochrome c1 and Rieske protein UQCRFS1, 2 core protein subunits UQCRC1/QCR1 and UQCRC2/QCR2, and 6 low-molecular weight protein subunits UQCRH/QCR6, UQCRB/QCR7, UQCRQ/QCR8, UQCR10/QCR9, UQCR11/QCR10 and subunit 9, the cleavage product of Rieske protein UQCRFS1 (PubMed:9651245). The complex exists as an obligatory dimer and forms supercomplexes (SCs) in the inner mitochondrial membrane with NADH-ubiquinone oxidoreductase (complex I, CI) and cytochrome c oxidase (complex IV, CIV), resulting in different assemblies (supercomplex SCI(1)III(2)IV(1) and megacomplex MCI(2)III(2)IV(2)) (PubMed:27830641).</text>
</comment>
<comment type="subcellular location">
    <subcellularLocation>
        <location evidence="1">Mitochondrion inner membrane</location>
        <topology evidence="1">Single-pass membrane protein</topology>
    </subcellularLocation>
</comment>
<comment type="similarity">
    <text evidence="4">Belongs to the UQCR11/QCR10 family.</text>
</comment>
<accession>P07552</accession>
<accession>A1A4P1</accession>
<accession>O18996</accession>
<accession>Q3T176</accession>
<proteinExistence type="evidence at protein level"/>
<sequence length="56" mass="6520">MLTRFLGPRYRQLARNWVPTASLWGAVGAVGLVWATDWRLILDWVPYINGKFKKDD</sequence>
<gene>
    <name type="primary">UQCR11</name>
    <name type="synonym">UQCR</name>
</gene>
<name>QCR10_BOVIN</name>
<reference key="1">
    <citation type="journal article" date="1985" name="FEBS Lett.">
        <title>Isolation and amino acid sequence of the smallest subunit of beef heart bc1 complex.</title>
        <authorList>
            <person name="Schaegger H."/>
            <person name="Borchart U."/>
            <person name="Aquila H."/>
            <person name="Link T.A."/>
            <person name="von Jagow G."/>
        </authorList>
    </citation>
    <scope>PROTEIN SEQUENCE</scope>
    <source>
        <tissue>Heart</tissue>
    </source>
</reference>
<reference key="2">
    <citation type="journal article" date="1997" name="Biochem. Mol. Biol. Int.">
        <title>Primary structure of the smallest (6.4-kDa) subunit of human and bovine ubiquinol-cytochrome c reductase deduced from cDNA sequences.</title>
        <authorList>
            <person name="Islam M.M."/>
            <person name="Suzuki H."/>
            <person name="Yoneda M."/>
            <person name="Tanaka M."/>
        </authorList>
    </citation>
    <scope>NUCLEOTIDE SEQUENCE [MRNA]</scope>
    <source>
        <tissue>Heart muscle</tissue>
    </source>
</reference>
<reference key="3">
    <citation type="submission" date="2006-10" db="EMBL/GenBank/DDBJ databases">
        <authorList>
            <consortium name="NIH - Mammalian Gene Collection (MGC) project"/>
        </authorList>
    </citation>
    <scope>NUCLEOTIDE SEQUENCE [LARGE SCALE MRNA]</scope>
    <source>
        <strain>Crossbred X Angus</strain>
        <strain>Hereford</strain>
        <tissue>Fetal pons</tissue>
        <tissue>Ileum</tissue>
    </source>
</reference>
<reference key="4">
    <citation type="journal article" date="1997" name="Science">
        <title>Crystal structure of the cytochrome bc1 complex from bovine heart mitochondria.</title>
        <authorList>
            <person name="Xia D."/>
            <person name="Yu C.A."/>
            <person name="Kim H."/>
            <person name="Xia J.Z."/>
            <person name="Kachurin A.M."/>
            <person name="Zhang L."/>
            <person name="Yu L."/>
            <person name="Deisenhofer J."/>
        </authorList>
    </citation>
    <scope>X-RAY CRYSTALLOGRAPHY (2.7 ANGSTROMS)</scope>
</reference>
<reference key="5">
    <citation type="journal article" date="1997" name="Science">
        <authorList>
            <person name="Xia D."/>
            <person name="Yu C.A."/>
            <person name="Kim H."/>
            <person name="Xia J.Z."/>
            <person name="Kachurin A.M."/>
            <person name="Zhang L."/>
            <person name="Yu L."/>
            <person name="Deisenhofer J."/>
        </authorList>
    </citation>
    <scope>ERRATUM OF PUBMED:9204897</scope>
</reference>
<reference key="6">
    <citation type="journal article" date="1998" name="Science">
        <title>Complete structure of the 11-subunit bovine mitochondrial cytochrome bc1 complex.</title>
        <authorList>
            <person name="Iwata S."/>
            <person name="Lee J.W."/>
            <person name="Okada K."/>
            <person name="Lee J.K."/>
            <person name="Iwata M."/>
            <person name="Rasmussen B."/>
            <person name="Link T.A."/>
            <person name="Ramaswamy S."/>
            <person name="Jap B.K."/>
        </authorList>
    </citation>
    <scope>X-RAY CRYSTALLOGRAPHY (3.0 ANGSTROMS)</scope>
</reference>
<reference key="7">
    <citation type="journal article" date="2002" name="Biochemistry">
        <title>The crystal structure of mitochondrial cytochrome bc1 in complex with famoxadone: the role of aromatic-aromatic interaction in inhibition.</title>
        <authorList>
            <person name="Gao X."/>
            <person name="Wen X."/>
            <person name="Yu C."/>
            <person name="Esser L."/>
            <person name="Tsao S."/>
            <person name="Quinn B."/>
            <person name="Zhang L."/>
            <person name="Yu L."/>
            <person name="Xia D."/>
        </authorList>
    </citation>
    <scope>X-RAY CRYSTALLOGRAPHY (2.35 ANGSTROMS)</scope>
</reference>
<reference key="8">
    <citation type="journal article" date="2004" name="J. Mol. Biol.">
        <title>Crystallographic studies of quinol oxidation site inhibitors: a modified classification of inhibitors for the cytochrome bc(1) complex.</title>
        <authorList>
            <person name="Esser L."/>
            <person name="Quinn B."/>
            <person name="Li Y.F."/>
            <person name="Zhang M."/>
            <person name="Elberry M."/>
            <person name="Yu L."/>
            <person name="Yu C.A."/>
            <person name="Xia D."/>
        </authorList>
    </citation>
    <scope>X-RAY CRYSTALLOGRAPHY (2.69 ANGSTROMS)</scope>
</reference>
<reference key="9">
    <citation type="journal article" date="2006" name="Proc. Natl. Acad. Sci. U.S.A.">
        <title>Surface-modulated motion switch: capture and release of iron-sulfur protein in the cytochrome bc1 complex.</title>
        <authorList>
            <person name="Esser L."/>
            <person name="Gong X."/>
            <person name="Yang S."/>
            <person name="Yu L."/>
            <person name="Yu C.A."/>
            <person name="Xia D."/>
        </authorList>
    </citation>
    <scope>X-RAY CRYSTALLOGRAPHY (2.26 ANGSTROMS)</scope>
</reference>
<reference key="10">
    <citation type="journal article" date="2016" name="Elife">
        <title>Functional asymmetry and electron flow in the bovine respirasome.</title>
        <authorList>
            <person name="Sousa J.S."/>
            <person name="Mills D.J."/>
            <person name="Vonck J."/>
            <person name="Kuehlbrandt W."/>
        </authorList>
    </citation>
    <scope>STRUCTURE BY ELECTRON MICROSCOPY (9.10 ANGSTROMS)</scope>
    <scope>SUBUNIT</scope>
</reference>
<organism>
    <name type="scientific">Bos taurus</name>
    <name type="common">Bovine</name>
    <dbReference type="NCBI Taxonomy" id="9913"/>
    <lineage>
        <taxon>Eukaryota</taxon>
        <taxon>Metazoa</taxon>
        <taxon>Chordata</taxon>
        <taxon>Craniata</taxon>
        <taxon>Vertebrata</taxon>
        <taxon>Euteleostomi</taxon>
        <taxon>Mammalia</taxon>
        <taxon>Eutheria</taxon>
        <taxon>Laurasiatheria</taxon>
        <taxon>Artiodactyla</taxon>
        <taxon>Ruminantia</taxon>
        <taxon>Pecora</taxon>
        <taxon>Bovidae</taxon>
        <taxon>Bovinae</taxon>
        <taxon>Bos</taxon>
    </lineage>
</organism>
<keyword id="KW-0002">3D-structure</keyword>
<keyword id="KW-0903">Direct protein sequencing</keyword>
<keyword id="KW-0249">Electron transport</keyword>
<keyword id="KW-0472">Membrane</keyword>
<keyword id="KW-0496">Mitochondrion</keyword>
<keyword id="KW-0999">Mitochondrion inner membrane</keyword>
<keyword id="KW-1185">Reference proteome</keyword>
<keyword id="KW-0679">Respiratory chain</keyword>
<keyword id="KW-0812">Transmembrane</keyword>
<keyword id="KW-1133">Transmembrane helix</keyword>
<keyword id="KW-0813">Transport</keyword>